<proteinExistence type="inferred from homology"/>
<feature type="chain" id="PRO_1000040408" description="6,7-dimethyl-8-ribityllumazine synthase">
    <location>
        <begin position="1"/>
        <end position="155"/>
    </location>
</feature>
<feature type="active site" description="Proton donor" evidence="1">
    <location>
        <position position="90"/>
    </location>
</feature>
<feature type="binding site" evidence="1">
    <location>
        <position position="24"/>
    </location>
    <ligand>
        <name>5-amino-6-(D-ribitylamino)uracil</name>
        <dbReference type="ChEBI" id="CHEBI:15934"/>
    </ligand>
</feature>
<feature type="binding site" evidence="1">
    <location>
        <begin position="58"/>
        <end position="60"/>
    </location>
    <ligand>
        <name>5-amino-6-(D-ribitylamino)uracil</name>
        <dbReference type="ChEBI" id="CHEBI:15934"/>
    </ligand>
</feature>
<feature type="binding site" evidence="1">
    <location>
        <begin position="82"/>
        <end position="84"/>
    </location>
    <ligand>
        <name>5-amino-6-(D-ribitylamino)uracil</name>
        <dbReference type="ChEBI" id="CHEBI:15934"/>
    </ligand>
</feature>
<feature type="binding site" evidence="1">
    <location>
        <begin position="87"/>
        <end position="88"/>
    </location>
    <ligand>
        <name>(2S)-2-hydroxy-3-oxobutyl phosphate</name>
        <dbReference type="ChEBI" id="CHEBI:58830"/>
    </ligand>
</feature>
<feature type="binding site" evidence="1">
    <location>
        <position position="115"/>
    </location>
    <ligand>
        <name>5-amino-6-(D-ribitylamino)uracil</name>
        <dbReference type="ChEBI" id="CHEBI:15934"/>
    </ligand>
</feature>
<feature type="binding site" evidence="1">
    <location>
        <position position="129"/>
    </location>
    <ligand>
        <name>(2S)-2-hydroxy-3-oxobutyl phosphate</name>
        <dbReference type="ChEBI" id="CHEBI:58830"/>
    </ligand>
</feature>
<dbReference type="EC" id="2.5.1.78" evidence="1"/>
<dbReference type="EMBL" id="CP000568">
    <property type="protein sequence ID" value="ABN51348.1"/>
    <property type="molecule type" value="Genomic_DNA"/>
</dbReference>
<dbReference type="SMR" id="A3DBL9"/>
<dbReference type="STRING" id="203119.Cthe_0107"/>
<dbReference type="GeneID" id="35803908"/>
<dbReference type="KEGG" id="cth:Cthe_0107"/>
<dbReference type="eggNOG" id="COG0054">
    <property type="taxonomic scope" value="Bacteria"/>
</dbReference>
<dbReference type="HOGENOM" id="CLU_089358_1_1_9"/>
<dbReference type="OrthoDB" id="9809709at2"/>
<dbReference type="UniPathway" id="UPA00275">
    <property type="reaction ID" value="UER00404"/>
</dbReference>
<dbReference type="Proteomes" id="UP000002145">
    <property type="component" value="Chromosome"/>
</dbReference>
<dbReference type="GO" id="GO:0005829">
    <property type="term" value="C:cytosol"/>
    <property type="evidence" value="ECO:0007669"/>
    <property type="project" value="TreeGrafter"/>
</dbReference>
<dbReference type="GO" id="GO:0009349">
    <property type="term" value="C:riboflavin synthase complex"/>
    <property type="evidence" value="ECO:0007669"/>
    <property type="project" value="InterPro"/>
</dbReference>
<dbReference type="GO" id="GO:0000906">
    <property type="term" value="F:6,7-dimethyl-8-ribityllumazine synthase activity"/>
    <property type="evidence" value="ECO:0007669"/>
    <property type="project" value="UniProtKB-UniRule"/>
</dbReference>
<dbReference type="GO" id="GO:0009231">
    <property type="term" value="P:riboflavin biosynthetic process"/>
    <property type="evidence" value="ECO:0007669"/>
    <property type="project" value="UniProtKB-UniRule"/>
</dbReference>
<dbReference type="CDD" id="cd09209">
    <property type="entry name" value="Lumazine_synthase-I"/>
    <property type="match status" value="1"/>
</dbReference>
<dbReference type="FunFam" id="3.40.50.960:FF:000001">
    <property type="entry name" value="6,7-dimethyl-8-ribityllumazine synthase"/>
    <property type="match status" value="1"/>
</dbReference>
<dbReference type="Gene3D" id="3.40.50.960">
    <property type="entry name" value="Lumazine/riboflavin synthase"/>
    <property type="match status" value="1"/>
</dbReference>
<dbReference type="HAMAP" id="MF_00178">
    <property type="entry name" value="Lumazine_synth"/>
    <property type="match status" value="1"/>
</dbReference>
<dbReference type="InterPro" id="IPR034964">
    <property type="entry name" value="LS"/>
</dbReference>
<dbReference type="InterPro" id="IPR002180">
    <property type="entry name" value="LS/RS"/>
</dbReference>
<dbReference type="InterPro" id="IPR036467">
    <property type="entry name" value="LS/RS_sf"/>
</dbReference>
<dbReference type="NCBIfam" id="TIGR00114">
    <property type="entry name" value="lumazine-synth"/>
    <property type="match status" value="1"/>
</dbReference>
<dbReference type="NCBIfam" id="NF000812">
    <property type="entry name" value="PRK00061.1-4"/>
    <property type="match status" value="1"/>
</dbReference>
<dbReference type="PANTHER" id="PTHR21058:SF0">
    <property type="entry name" value="6,7-DIMETHYL-8-RIBITYLLUMAZINE SYNTHASE"/>
    <property type="match status" value="1"/>
</dbReference>
<dbReference type="PANTHER" id="PTHR21058">
    <property type="entry name" value="6,7-DIMETHYL-8-RIBITYLLUMAZINE SYNTHASE DMRL SYNTHASE LUMAZINE SYNTHASE"/>
    <property type="match status" value="1"/>
</dbReference>
<dbReference type="Pfam" id="PF00885">
    <property type="entry name" value="DMRL_synthase"/>
    <property type="match status" value="1"/>
</dbReference>
<dbReference type="SUPFAM" id="SSF52121">
    <property type="entry name" value="Lumazine synthase"/>
    <property type="match status" value="1"/>
</dbReference>
<protein>
    <recommendedName>
        <fullName evidence="1">6,7-dimethyl-8-ribityllumazine synthase</fullName>
        <shortName evidence="1">DMRL synthase</shortName>
        <shortName evidence="1">LS</shortName>
        <shortName evidence="1">Lumazine synthase</shortName>
        <ecNumber evidence="1">2.5.1.78</ecNumber>
    </recommendedName>
</protein>
<organism>
    <name type="scientific">Acetivibrio thermocellus (strain ATCC 27405 / DSM 1237 / JCM 9322 / NBRC 103400 / NCIMB 10682 / NRRL B-4536 / VPI 7372)</name>
    <name type="common">Clostridium thermocellum</name>
    <dbReference type="NCBI Taxonomy" id="203119"/>
    <lineage>
        <taxon>Bacteria</taxon>
        <taxon>Bacillati</taxon>
        <taxon>Bacillota</taxon>
        <taxon>Clostridia</taxon>
        <taxon>Eubacteriales</taxon>
        <taxon>Oscillospiraceae</taxon>
        <taxon>Acetivibrio</taxon>
    </lineage>
</organism>
<accession>A3DBL9</accession>
<sequence length="155" mass="16439">MAIKTNEGKLIASGLKFGVVVARFNEFISSKLLGGVIDGLIRHGASEEDIEISWVPGAFEIPLVAQKMANSKKFDAIICIGAVIRGSTPHFDYVANEMSKGIAKVSLDTGIPIAFGVLTTDTIEQAIERAGTKVGNKGYDAAVTAIEMANLLKMI</sequence>
<comment type="function">
    <text evidence="1">Catalyzes the formation of 6,7-dimethyl-8-ribityllumazine by condensation of 5-amino-6-(D-ribitylamino)uracil with 3,4-dihydroxy-2-butanone 4-phosphate. This is the penultimate step in the biosynthesis of riboflavin.</text>
</comment>
<comment type="catalytic activity">
    <reaction evidence="1">
        <text>(2S)-2-hydroxy-3-oxobutyl phosphate + 5-amino-6-(D-ribitylamino)uracil = 6,7-dimethyl-8-(1-D-ribityl)lumazine + phosphate + 2 H2O + H(+)</text>
        <dbReference type="Rhea" id="RHEA:26152"/>
        <dbReference type="ChEBI" id="CHEBI:15377"/>
        <dbReference type="ChEBI" id="CHEBI:15378"/>
        <dbReference type="ChEBI" id="CHEBI:15934"/>
        <dbReference type="ChEBI" id="CHEBI:43474"/>
        <dbReference type="ChEBI" id="CHEBI:58201"/>
        <dbReference type="ChEBI" id="CHEBI:58830"/>
        <dbReference type="EC" id="2.5.1.78"/>
    </reaction>
</comment>
<comment type="pathway">
    <text evidence="1">Cofactor biosynthesis; riboflavin biosynthesis; riboflavin from 2-hydroxy-3-oxobutyl phosphate and 5-amino-6-(D-ribitylamino)uracil: step 1/2.</text>
</comment>
<comment type="similarity">
    <text evidence="1">Belongs to the DMRL synthase family.</text>
</comment>
<reference key="1">
    <citation type="submission" date="2007-02" db="EMBL/GenBank/DDBJ databases">
        <title>Complete sequence of Clostridium thermocellum ATCC 27405.</title>
        <authorList>
            <consortium name="US DOE Joint Genome Institute"/>
            <person name="Copeland A."/>
            <person name="Lucas S."/>
            <person name="Lapidus A."/>
            <person name="Barry K."/>
            <person name="Detter J.C."/>
            <person name="Glavina del Rio T."/>
            <person name="Hammon N."/>
            <person name="Israni S."/>
            <person name="Dalin E."/>
            <person name="Tice H."/>
            <person name="Pitluck S."/>
            <person name="Chertkov O."/>
            <person name="Brettin T."/>
            <person name="Bruce D."/>
            <person name="Han C."/>
            <person name="Tapia R."/>
            <person name="Gilna P."/>
            <person name="Schmutz J."/>
            <person name="Larimer F."/>
            <person name="Land M."/>
            <person name="Hauser L."/>
            <person name="Kyrpides N."/>
            <person name="Mikhailova N."/>
            <person name="Wu J.H.D."/>
            <person name="Newcomb M."/>
            <person name="Richardson P."/>
        </authorList>
    </citation>
    <scope>NUCLEOTIDE SEQUENCE [LARGE SCALE GENOMIC DNA]</scope>
    <source>
        <strain>ATCC 27405 / DSM 1237 / JCM 9322 / NBRC 103400 / NCIMB 10682 / NRRL B-4536 / VPI 7372</strain>
    </source>
</reference>
<keyword id="KW-1185">Reference proteome</keyword>
<keyword id="KW-0686">Riboflavin biosynthesis</keyword>
<keyword id="KW-0808">Transferase</keyword>
<name>RISB_ACET2</name>
<evidence type="ECO:0000255" key="1">
    <source>
        <dbReference type="HAMAP-Rule" id="MF_00178"/>
    </source>
</evidence>
<gene>
    <name evidence="1" type="primary">ribH</name>
    <name type="ordered locus">Cthe_0107</name>
</gene>